<evidence type="ECO:0000255" key="1">
    <source>
        <dbReference type="HAMAP-Rule" id="MF_01589"/>
    </source>
</evidence>
<comment type="function">
    <text evidence="1">Catalyzes the conversion of S-adenosyl-L-methionine (SAM) to carboxy-S-adenosyl-L-methionine (Cx-SAM).</text>
</comment>
<comment type="catalytic activity">
    <reaction evidence="1">
        <text>prephenate + S-adenosyl-L-methionine = carboxy-S-adenosyl-L-methionine + 3-phenylpyruvate + H2O</text>
        <dbReference type="Rhea" id="RHEA:51692"/>
        <dbReference type="ChEBI" id="CHEBI:15377"/>
        <dbReference type="ChEBI" id="CHEBI:18005"/>
        <dbReference type="ChEBI" id="CHEBI:29934"/>
        <dbReference type="ChEBI" id="CHEBI:59789"/>
        <dbReference type="ChEBI" id="CHEBI:134278"/>
    </reaction>
</comment>
<comment type="subunit">
    <text evidence="1">Homodimer.</text>
</comment>
<comment type="similarity">
    <text evidence="1">Belongs to the class I-like SAM-binding methyltransferase superfamily. Cx-SAM synthase family.</text>
</comment>
<sequence>MNPKSNPDTIFSAPIDKIGDFTFDERVAEVFPDMIQRSVPGYSNIISAIGMLAERFVKPHSNIYDLGCSLGAATLSMRRHIKQEGCKIIAVDNSPAMVERCKLHVNAYRSDTPVTVVEADIRNIEIENASVVVLNFTLQFLSPEDRYALLEKIYAGLRPGGILILSEKFVFEDEVSNELLIDLHHDFKRANGYSELEISQKRSAIENVMRPDSKKDHKERFAKIGFSSYDVWFQCFNFGSMFAIK</sequence>
<proteinExistence type="inferred from homology"/>
<gene>
    <name evidence="1" type="primary">cmoA</name>
    <name type="ordered locus">VP1045</name>
</gene>
<protein>
    <recommendedName>
        <fullName evidence="1">Carboxy-S-adenosyl-L-methionine synthase</fullName>
        <shortName evidence="1">Cx-SAM synthase</shortName>
        <ecNumber evidence="1">2.1.3.-</ecNumber>
    </recommendedName>
</protein>
<keyword id="KW-0949">S-adenosyl-L-methionine</keyword>
<keyword id="KW-0808">Transferase</keyword>
<organism>
    <name type="scientific">Vibrio parahaemolyticus serotype O3:K6 (strain RIMD 2210633)</name>
    <dbReference type="NCBI Taxonomy" id="223926"/>
    <lineage>
        <taxon>Bacteria</taxon>
        <taxon>Pseudomonadati</taxon>
        <taxon>Pseudomonadota</taxon>
        <taxon>Gammaproteobacteria</taxon>
        <taxon>Vibrionales</taxon>
        <taxon>Vibrionaceae</taxon>
        <taxon>Vibrio</taxon>
    </lineage>
</organism>
<accession>Q87QV4</accession>
<dbReference type="EC" id="2.1.3.-" evidence="1"/>
<dbReference type="EMBL" id="BA000031">
    <property type="protein sequence ID" value="BAC59308.1"/>
    <property type="molecule type" value="Genomic_DNA"/>
</dbReference>
<dbReference type="RefSeq" id="NP_797424.1">
    <property type="nucleotide sequence ID" value="NC_004603.1"/>
</dbReference>
<dbReference type="RefSeq" id="WP_005457217.1">
    <property type="nucleotide sequence ID" value="NC_004603.1"/>
</dbReference>
<dbReference type="SMR" id="Q87QV4"/>
<dbReference type="GeneID" id="1188549"/>
<dbReference type="KEGG" id="vpa:VP1045"/>
<dbReference type="PATRIC" id="fig|223926.6.peg.989"/>
<dbReference type="eggNOG" id="COG4106">
    <property type="taxonomic scope" value="Bacteria"/>
</dbReference>
<dbReference type="HOGENOM" id="CLU_078475_0_0_6"/>
<dbReference type="Proteomes" id="UP000002493">
    <property type="component" value="Chromosome 1"/>
</dbReference>
<dbReference type="GO" id="GO:0016743">
    <property type="term" value="F:carboxyl- or carbamoyltransferase activity"/>
    <property type="evidence" value="ECO:0007669"/>
    <property type="project" value="UniProtKB-UniRule"/>
</dbReference>
<dbReference type="GO" id="GO:1904047">
    <property type="term" value="F:S-adenosyl-L-methionine binding"/>
    <property type="evidence" value="ECO:0007669"/>
    <property type="project" value="UniProtKB-UniRule"/>
</dbReference>
<dbReference type="GO" id="GO:0002098">
    <property type="term" value="P:tRNA wobble uridine modification"/>
    <property type="evidence" value="ECO:0007669"/>
    <property type="project" value="InterPro"/>
</dbReference>
<dbReference type="CDD" id="cd02440">
    <property type="entry name" value="AdoMet_MTases"/>
    <property type="match status" value="1"/>
</dbReference>
<dbReference type="Gene3D" id="3.40.50.150">
    <property type="entry name" value="Vaccinia Virus protein VP39"/>
    <property type="match status" value="1"/>
</dbReference>
<dbReference type="HAMAP" id="MF_01589">
    <property type="entry name" value="Cx_SAM_synthase"/>
    <property type="match status" value="1"/>
</dbReference>
<dbReference type="InterPro" id="IPR005271">
    <property type="entry name" value="CmoA"/>
</dbReference>
<dbReference type="InterPro" id="IPR041698">
    <property type="entry name" value="Methyltransf_25"/>
</dbReference>
<dbReference type="InterPro" id="IPR029063">
    <property type="entry name" value="SAM-dependent_MTases_sf"/>
</dbReference>
<dbReference type="NCBIfam" id="TIGR00740">
    <property type="entry name" value="carboxy-S-adenosyl-L-methionine synthase CmoA"/>
    <property type="match status" value="1"/>
</dbReference>
<dbReference type="NCBIfam" id="NF011995">
    <property type="entry name" value="PRK15451.1"/>
    <property type="match status" value="1"/>
</dbReference>
<dbReference type="PANTHER" id="PTHR43861:SF2">
    <property type="entry name" value="CARBOXY-S-ADENOSYL-L-METHIONINE SYNTHASE"/>
    <property type="match status" value="1"/>
</dbReference>
<dbReference type="PANTHER" id="PTHR43861">
    <property type="entry name" value="TRANS-ACONITATE 2-METHYLTRANSFERASE-RELATED"/>
    <property type="match status" value="1"/>
</dbReference>
<dbReference type="Pfam" id="PF13649">
    <property type="entry name" value="Methyltransf_25"/>
    <property type="match status" value="1"/>
</dbReference>
<dbReference type="PIRSF" id="PIRSF006325">
    <property type="entry name" value="MeTrfase_bac"/>
    <property type="match status" value="1"/>
</dbReference>
<dbReference type="SUPFAM" id="SSF53335">
    <property type="entry name" value="S-adenosyl-L-methionine-dependent methyltransferases"/>
    <property type="match status" value="1"/>
</dbReference>
<reference key="1">
    <citation type="journal article" date="2003" name="Lancet">
        <title>Genome sequence of Vibrio parahaemolyticus: a pathogenic mechanism distinct from that of V. cholerae.</title>
        <authorList>
            <person name="Makino K."/>
            <person name="Oshima K."/>
            <person name="Kurokawa K."/>
            <person name="Yokoyama K."/>
            <person name="Uda T."/>
            <person name="Tagomori K."/>
            <person name="Iijima Y."/>
            <person name="Najima M."/>
            <person name="Nakano M."/>
            <person name="Yamashita A."/>
            <person name="Kubota Y."/>
            <person name="Kimura S."/>
            <person name="Yasunaga T."/>
            <person name="Honda T."/>
            <person name="Shinagawa H."/>
            <person name="Hattori M."/>
            <person name="Iida T."/>
        </authorList>
    </citation>
    <scope>NUCLEOTIDE SEQUENCE [LARGE SCALE GENOMIC DNA]</scope>
    <source>
        <strain>RIMD 2210633</strain>
    </source>
</reference>
<name>CMOA_VIBPA</name>
<feature type="chain" id="PRO_0000314401" description="Carboxy-S-adenosyl-L-methionine synthase">
    <location>
        <begin position="1"/>
        <end position="245"/>
    </location>
</feature>
<feature type="binding site" evidence="1">
    <location>
        <position position="42"/>
    </location>
    <ligand>
        <name>S-adenosyl-L-methionine</name>
        <dbReference type="ChEBI" id="CHEBI:59789"/>
    </ligand>
</feature>
<feature type="binding site" evidence="1">
    <location>
        <begin position="67"/>
        <end position="69"/>
    </location>
    <ligand>
        <name>S-adenosyl-L-methionine</name>
        <dbReference type="ChEBI" id="CHEBI:59789"/>
    </ligand>
</feature>
<feature type="binding site" evidence="1">
    <location>
        <begin position="92"/>
        <end position="93"/>
    </location>
    <ligand>
        <name>S-adenosyl-L-methionine</name>
        <dbReference type="ChEBI" id="CHEBI:59789"/>
    </ligand>
</feature>
<feature type="binding site" evidence="1">
    <location>
        <begin position="120"/>
        <end position="121"/>
    </location>
    <ligand>
        <name>S-adenosyl-L-methionine</name>
        <dbReference type="ChEBI" id="CHEBI:59789"/>
    </ligand>
</feature>
<feature type="binding site" evidence="1">
    <location>
        <position position="135"/>
    </location>
    <ligand>
        <name>S-adenosyl-L-methionine</name>
        <dbReference type="ChEBI" id="CHEBI:59789"/>
    </ligand>
</feature>
<feature type="binding site" evidence="1">
    <location>
        <position position="202"/>
    </location>
    <ligand>
        <name>S-adenosyl-L-methionine</name>
        <dbReference type="ChEBI" id="CHEBI:59789"/>
    </ligand>
</feature>